<accession>Q2YBU4</accession>
<gene>
    <name evidence="1" type="primary">pgi</name>
    <name type="ordered locus">Nmul_A0469</name>
</gene>
<feature type="chain" id="PRO_0000230922" description="Glucose-6-phosphate isomerase">
    <location>
        <begin position="1"/>
        <end position="542"/>
    </location>
</feature>
<feature type="active site" description="Proton donor" evidence="1">
    <location>
        <position position="354"/>
    </location>
</feature>
<feature type="active site" evidence="1">
    <location>
        <position position="385"/>
    </location>
</feature>
<feature type="active site" evidence="1">
    <location>
        <position position="505"/>
    </location>
</feature>
<protein>
    <recommendedName>
        <fullName evidence="1">Glucose-6-phosphate isomerase</fullName>
        <shortName evidence="1">GPI</shortName>
        <ecNumber evidence="1">5.3.1.9</ecNumber>
    </recommendedName>
    <alternativeName>
        <fullName evidence="1">Phosphoglucose isomerase</fullName>
        <shortName evidence="1">PGI</shortName>
    </alternativeName>
    <alternativeName>
        <fullName evidence="1">Phosphohexose isomerase</fullName>
        <shortName evidence="1">PHI</shortName>
    </alternativeName>
</protein>
<organism>
    <name type="scientific">Nitrosospira multiformis (strain ATCC 25196 / NCIMB 11849 / C 71)</name>
    <dbReference type="NCBI Taxonomy" id="323848"/>
    <lineage>
        <taxon>Bacteria</taxon>
        <taxon>Pseudomonadati</taxon>
        <taxon>Pseudomonadota</taxon>
        <taxon>Betaproteobacteria</taxon>
        <taxon>Nitrosomonadales</taxon>
        <taxon>Nitrosomonadaceae</taxon>
        <taxon>Nitrosospira</taxon>
    </lineage>
</organism>
<name>G6PI_NITMU</name>
<comment type="function">
    <text evidence="1">Catalyzes the reversible isomerization of glucose-6-phosphate to fructose-6-phosphate.</text>
</comment>
<comment type="catalytic activity">
    <reaction evidence="1">
        <text>alpha-D-glucose 6-phosphate = beta-D-fructose 6-phosphate</text>
        <dbReference type="Rhea" id="RHEA:11816"/>
        <dbReference type="ChEBI" id="CHEBI:57634"/>
        <dbReference type="ChEBI" id="CHEBI:58225"/>
        <dbReference type="EC" id="5.3.1.9"/>
    </reaction>
</comment>
<comment type="pathway">
    <text evidence="1">Carbohydrate biosynthesis; gluconeogenesis.</text>
</comment>
<comment type="pathway">
    <text evidence="1">Carbohydrate degradation; glycolysis; D-glyceraldehyde 3-phosphate and glycerone phosphate from D-glucose: step 2/4.</text>
</comment>
<comment type="subcellular location">
    <subcellularLocation>
        <location evidence="1">Cytoplasm</location>
    </subcellularLocation>
</comment>
<comment type="similarity">
    <text evidence="1">Belongs to the GPI family.</text>
</comment>
<comment type="sequence caution" evidence="2">
    <conflict type="erroneous initiation">
        <sequence resource="EMBL-CDS" id="ABB73777"/>
    </conflict>
</comment>
<sequence>MITPLTQRPAWKALEAHYQTIKGMHLRQLFADDPKRGERFTAEAVGLYLDYSKNRITDETLHLLVQLAEECGLRERIEAMFRGDAINVTEQRAVLHIALRAPRNEKILVDGNDVVPGVHAVLDRMADFSDKIRSGDWQGHTGKRIRNIINIGIGGSDLGPVMAYEALRHYSLHNLSFRFISNVDGTDFVEATRGLDPEETLFIICSKTFTTTETLANAHTARRWMLRQIKDLEGVRKHFVAVSTNAEEVARFGIDTANMFEFWDWVGGRYSMDSAIGLSTMIAVGPENFREMLAGFHAMDQHFYSAPFDRNLPVLMGLLSLWYNNFFGAQTLAVLPYEQYLKRFPAYLQQLTMESNGKHITLNGSQVDYQTSPIVWGEPGTNGQHSFYQLIHQGTRLIPCDFIGFCQTLNPLGDHHDLLMANLFAQTEALAFGKTEDEVKAEGVPDWLCPHRSFEGNRPTNTILAERLTPHTLGALVALYEQSVFTQGTIWQIDSFDQWGVELGKVLAHRIGQELEDENGKSLKHDSSTNALIQRYNRLKQK</sequence>
<reference key="1">
    <citation type="submission" date="2005-08" db="EMBL/GenBank/DDBJ databases">
        <title>Complete sequence of chromosome 1 of Nitrosospira multiformis ATCC 25196.</title>
        <authorList>
            <person name="Copeland A."/>
            <person name="Lucas S."/>
            <person name="Lapidus A."/>
            <person name="Barry K."/>
            <person name="Detter J.C."/>
            <person name="Glavina T."/>
            <person name="Hammon N."/>
            <person name="Israni S."/>
            <person name="Pitluck S."/>
            <person name="Chain P."/>
            <person name="Malfatti S."/>
            <person name="Shin M."/>
            <person name="Vergez L."/>
            <person name="Schmutz J."/>
            <person name="Larimer F."/>
            <person name="Land M."/>
            <person name="Hauser L."/>
            <person name="Kyrpides N."/>
            <person name="Lykidis A."/>
            <person name="Richardson P."/>
        </authorList>
    </citation>
    <scope>NUCLEOTIDE SEQUENCE [LARGE SCALE GENOMIC DNA]</scope>
    <source>
        <strain>ATCC 25196 / NCIMB 11849 / C 71</strain>
    </source>
</reference>
<keyword id="KW-0963">Cytoplasm</keyword>
<keyword id="KW-0312">Gluconeogenesis</keyword>
<keyword id="KW-0324">Glycolysis</keyword>
<keyword id="KW-0413">Isomerase</keyword>
<keyword id="KW-1185">Reference proteome</keyword>
<proteinExistence type="inferred from homology"/>
<evidence type="ECO:0000255" key="1">
    <source>
        <dbReference type="HAMAP-Rule" id="MF_00473"/>
    </source>
</evidence>
<evidence type="ECO:0000305" key="2"/>
<dbReference type="EC" id="5.3.1.9" evidence="1"/>
<dbReference type="EMBL" id="CP000103">
    <property type="protein sequence ID" value="ABB73777.1"/>
    <property type="status" value="ALT_INIT"/>
    <property type="molecule type" value="Genomic_DNA"/>
</dbReference>
<dbReference type="RefSeq" id="WP_011379831.1">
    <property type="nucleotide sequence ID" value="NZ_FNVK01000001.1"/>
</dbReference>
<dbReference type="SMR" id="Q2YBU4"/>
<dbReference type="STRING" id="323848.Nmul_A0469"/>
<dbReference type="KEGG" id="nmu:Nmul_A0469"/>
<dbReference type="eggNOG" id="COG0166">
    <property type="taxonomic scope" value="Bacteria"/>
</dbReference>
<dbReference type="HOGENOM" id="CLU_017947_3_1_4"/>
<dbReference type="OrthoDB" id="140919at2"/>
<dbReference type="UniPathway" id="UPA00109">
    <property type="reaction ID" value="UER00181"/>
</dbReference>
<dbReference type="UniPathway" id="UPA00138"/>
<dbReference type="Proteomes" id="UP000002718">
    <property type="component" value="Chromosome"/>
</dbReference>
<dbReference type="GO" id="GO:0005829">
    <property type="term" value="C:cytosol"/>
    <property type="evidence" value="ECO:0007669"/>
    <property type="project" value="TreeGrafter"/>
</dbReference>
<dbReference type="GO" id="GO:0097367">
    <property type="term" value="F:carbohydrate derivative binding"/>
    <property type="evidence" value="ECO:0007669"/>
    <property type="project" value="InterPro"/>
</dbReference>
<dbReference type="GO" id="GO:0004347">
    <property type="term" value="F:glucose-6-phosphate isomerase activity"/>
    <property type="evidence" value="ECO:0007669"/>
    <property type="project" value="UniProtKB-UniRule"/>
</dbReference>
<dbReference type="GO" id="GO:0048029">
    <property type="term" value="F:monosaccharide binding"/>
    <property type="evidence" value="ECO:0007669"/>
    <property type="project" value="TreeGrafter"/>
</dbReference>
<dbReference type="GO" id="GO:0006094">
    <property type="term" value="P:gluconeogenesis"/>
    <property type="evidence" value="ECO:0007669"/>
    <property type="project" value="UniProtKB-UniRule"/>
</dbReference>
<dbReference type="GO" id="GO:0051156">
    <property type="term" value="P:glucose 6-phosphate metabolic process"/>
    <property type="evidence" value="ECO:0007669"/>
    <property type="project" value="TreeGrafter"/>
</dbReference>
<dbReference type="GO" id="GO:0006096">
    <property type="term" value="P:glycolytic process"/>
    <property type="evidence" value="ECO:0007669"/>
    <property type="project" value="UniProtKB-UniRule"/>
</dbReference>
<dbReference type="CDD" id="cd05015">
    <property type="entry name" value="SIS_PGI_1"/>
    <property type="match status" value="1"/>
</dbReference>
<dbReference type="CDD" id="cd05016">
    <property type="entry name" value="SIS_PGI_2"/>
    <property type="match status" value="1"/>
</dbReference>
<dbReference type="FunFam" id="1.10.1390.10:FF:000001">
    <property type="entry name" value="Glucose-6-phosphate isomerase"/>
    <property type="match status" value="1"/>
</dbReference>
<dbReference type="FunFam" id="3.40.50.10490:FF:000018">
    <property type="entry name" value="Glucose-6-phosphate isomerase"/>
    <property type="match status" value="1"/>
</dbReference>
<dbReference type="Gene3D" id="1.10.1390.10">
    <property type="match status" value="1"/>
</dbReference>
<dbReference type="Gene3D" id="3.40.50.10490">
    <property type="entry name" value="Glucose-6-phosphate isomerase like protein, domain 1"/>
    <property type="match status" value="2"/>
</dbReference>
<dbReference type="HAMAP" id="MF_00473">
    <property type="entry name" value="G6P_isomerase"/>
    <property type="match status" value="1"/>
</dbReference>
<dbReference type="InterPro" id="IPR001672">
    <property type="entry name" value="G6P_Isomerase"/>
</dbReference>
<dbReference type="InterPro" id="IPR023096">
    <property type="entry name" value="G6P_Isomerase_C"/>
</dbReference>
<dbReference type="InterPro" id="IPR018189">
    <property type="entry name" value="Phosphoglucose_isomerase_CS"/>
</dbReference>
<dbReference type="InterPro" id="IPR046348">
    <property type="entry name" value="SIS_dom_sf"/>
</dbReference>
<dbReference type="InterPro" id="IPR035476">
    <property type="entry name" value="SIS_PGI_1"/>
</dbReference>
<dbReference type="InterPro" id="IPR035482">
    <property type="entry name" value="SIS_PGI_2"/>
</dbReference>
<dbReference type="NCBIfam" id="NF001211">
    <property type="entry name" value="PRK00179.1"/>
    <property type="match status" value="1"/>
</dbReference>
<dbReference type="PANTHER" id="PTHR11469">
    <property type="entry name" value="GLUCOSE-6-PHOSPHATE ISOMERASE"/>
    <property type="match status" value="1"/>
</dbReference>
<dbReference type="PANTHER" id="PTHR11469:SF1">
    <property type="entry name" value="GLUCOSE-6-PHOSPHATE ISOMERASE"/>
    <property type="match status" value="1"/>
</dbReference>
<dbReference type="Pfam" id="PF00342">
    <property type="entry name" value="PGI"/>
    <property type="match status" value="1"/>
</dbReference>
<dbReference type="PRINTS" id="PR00662">
    <property type="entry name" value="G6PISOMERASE"/>
</dbReference>
<dbReference type="SUPFAM" id="SSF53697">
    <property type="entry name" value="SIS domain"/>
    <property type="match status" value="1"/>
</dbReference>
<dbReference type="PROSITE" id="PS00765">
    <property type="entry name" value="P_GLUCOSE_ISOMERASE_1"/>
    <property type="match status" value="1"/>
</dbReference>
<dbReference type="PROSITE" id="PS00174">
    <property type="entry name" value="P_GLUCOSE_ISOMERASE_2"/>
    <property type="match status" value="1"/>
</dbReference>
<dbReference type="PROSITE" id="PS51463">
    <property type="entry name" value="P_GLUCOSE_ISOMERASE_3"/>
    <property type="match status" value="1"/>
</dbReference>